<name>PE2R2_HUMAN</name>
<evidence type="ECO:0000255" key="1"/>
<evidence type="ECO:0000255" key="2">
    <source>
        <dbReference type="PROSITE-ProRule" id="PRU00521"/>
    </source>
</evidence>
<evidence type="ECO:0000256" key="3">
    <source>
        <dbReference type="SAM" id="MobiDB-lite"/>
    </source>
</evidence>
<evidence type="ECO:0000305" key="4"/>
<evidence type="ECO:0007829" key="5">
    <source>
        <dbReference type="PDB" id="7CX2"/>
    </source>
</evidence>
<keyword id="KW-0002">3D-structure</keyword>
<keyword id="KW-1003">Cell membrane</keyword>
<keyword id="KW-1015">Disulfide bond</keyword>
<keyword id="KW-0297">G-protein coupled receptor</keyword>
<keyword id="KW-0325">Glycoprotein</keyword>
<keyword id="KW-0472">Membrane</keyword>
<keyword id="KW-1267">Proteomics identification</keyword>
<keyword id="KW-0675">Receptor</keyword>
<keyword id="KW-1185">Reference proteome</keyword>
<keyword id="KW-0807">Transducer</keyword>
<keyword id="KW-0812">Transmembrane</keyword>
<keyword id="KW-1133">Transmembrane helix</keyword>
<dbReference type="EMBL" id="U19487">
    <property type="protein sequence ID" value="AAA61681.1"/>
    <property type="molecule type" value="mRNA"/>
</dbReference>
<dbReference type="EMBL" id="X83868">
    <property type="protein sequence ID" value="CAA58749.1"/>
    <property type="molecule type" value="mRNA"/>
</dbReference>
<dbReference type="EMBL" id="AF134202">
    <property type="protein sequence ID" value="AAD44177.1"/>
    <property type="molecule type" value="Genomic_DNA"/>
</dbReference>
<dbReference type="EMBL" id="AF134201">
    <property type="protein sequence ID" value="AAD44177.1"/>
    <property type="status" value="JOINED"/>
    <property type="molecule type" value="Genomic_DNA"/>
</dbReference>
<dbReference type="EMBL" id="AY275471">
    <property type="protein sequence ID" value="AAP32303.1"/>
    <property type="molecule type" value="mRNA"/>
</dbReference>
<dbReference type="EMBL" id="DQ398948">
    <property type="protein sequence ID" value="ABD48958.1"/>
    <property type="molecule type" value="Genomic_DNA"/>
</dbReference>
<dbReference type="EMBL" id="CH471078">
    <property type="protein sequence ID" value="EAW65652.1"/>
    <property type="molecule type" value="Genomic_DNA"/>
</dbReference>
<dbReference type="EMBL" id="CH471078">
    <property type="protein sequence ID" value="EAW65654.1"/>
    <property type="molecule type" value="Genomic_DNA"/>
</dbReference>
<dbReference type="EMBL" id="BC093927">
    <property type="protein sequence ID" value="AAH93927.1"/>
    <property type="molecule type" value="mRNA"/>
</dbReference>
<dbReference type="EMBL" id="BC093929">
    <property type="protein sequence ID" value="AAH93929.1"/>
    <property type="molecule type" value="mRNA"/>
</dbReference>
<dbReference type="CCDS" id="CCDS9708.1"/>
<dbReference type="PIR" id="I38920">
    <property type="entry name" value="I38920"/>
</dbReference>
<dbReference type="PIR" id="S51312">
    <property type="entry name" value="S51312"/>
</dbReference>
<dbReference type="RefSeq" id="NP_000947.2">
    <property type="nucleotide sequence ID" value="NM_000956.3"/>
</dbReference>
<dbReference type="PDB" id="7CX2">
    <property type="method" value="EM"/>
    <property type="resolution" value="2.80 A"/>
    <property type="chains" value="R=1-358"/>
</dbReference>
<dbReference type="PDB" id="7CX3">
    <property type="method" value="EM"/>
    <property type="resolution" value="2.80 A"/>
    <property type="chains" value="R=1-358"/>
</dbReference>
<dbReference type="PDB" id="7CX4">
    <property type="method" value="EM"/>
    <property type="resolution" value="2.90 A"/>
    <property type="chains" value="R=1-358"/>
</dbReference>
<dbReference type="PDBsum" id="7CX2"/>
<dbReference type="PDBsum" id="7CX3"/>
<dbReference type="PDBsum" id="7CX4"/>
<dbReference type="EMDB" id="EMD-30489"/>
<dbReference type="EMDB" id="EMD-30490"/>
<dbReference type="EMDB" id="EMD-30491"/>
<dbReference type="SMR" id="P43116"/>
<dbReference type="BioGRID" id="111704">
    <property type="interactions" value="2"/>
</dbReference>
<dbReference type="FunCoup" id="P43116">
    <property type="interactions" value="1273"/>
</dbReference>
<dbReference type="IntAct" id="P43116">
    <property type="interactions" value="4"/>
</dbReference>
<dbReference type="STRING" id="9606.ENSP00000245457"/>
<dbReference type="BindingDB" id="P43116"/>
<dbReference type="ChEMBL" id="CHEMBL1881"/>
<dbReference type="DrugBank" id="DB00770">
    <property type="generic name" value="Alprostadil"/>
</dbReference>
<dbReference type="DrugBank" id="DB12789">
    <property type="generic name" value="Dinoprost"/>
</dbReference>
<dbReference type="DrugBank" id="DB00917">
    <property type="generic name" value="Dinoprostone"/>
</dbReference>
<dbReference type="DrugBank" id="DB12022">
    <property type="generic name" value="Evatanepag"/>
</dbReference>
<dbReference type="DrugBank" id="DB08964">
    <property type="generic name" value="Gemeprost"/>
</dbReference>
<dbReference type="DrugBank" id="DB01088">
    <property type="generic name" value="Iloprost"/>
</dbReference>
<dbReference type="DrugBank" id="DB11629">
    <property type="generic name" value="Laropiprant"/>
</dbReference>
<dbReference type="DrugBank" id="DB09211">
    <property type="generic name" value="Limaprost"/>
</dbReference>
<dbReference type="DrugBank" id="DB00929">
    <property type="generic name" value="Misoprostol"/>
</dbReference>
<dbReference type="DrugBank" id="DB00688">
    <property type="generic name" value="Mycophenolate mofetil"/>
</dbReference>
<dbReference type="DrugBank" id="DB15071">
    <property type="generic name" value="Omidenepag isopropyl"/>
</dbReference>
<dbReference type="DrugBank" id="DB12024">
    <property type="generic name" value="PF-04418948"/>
</dbReference>
<dbReference type="DrugBank" id="DB02056">
    <property type="generic name" value="Prostaglandin D2"/>
</dbReference>
<dbReference type="DrugBank" id="DB16315">
    <property type="generic name" value="Rivenprost"/>
</dbReference>
<dbReference type="DrugBank" id="DB12623">
    <property type="generic name" value="Taprenepag"/>
</dbReference>
<dbReference type="DrugBank" id="DB00374">
    <property type="generic name" value="Treprostinil"/>
</dbReference>
<dbReference type="DrugBank" id="DB04297">
    <property type="generic name" value="Trichostatin A"/>
</dbReference>
<dbReference type="DrugCentral" id="P43116"/>
<dbReference type="GuidetoPHARMACOLOGY" id="341"/>
<dbReference type="GlyCosmos" id="P43116">
    <property type="glycosylation" value="4 sites, No reported glycans"/>
</dbReference>
<dbReference type="GlyGen" id="P43116">
    <property type="glycosylation" value="4 sites, 1 N-linked glycan (1 site)"/>
</dbReference>
<dbReference type="iPTMnet" id="P43116"/>
<dbReference type="PhosphoSitePlus" id="P43116"/>
<dbReference type="BioMuta" id="PTGER2"/>
<dbReference type="DMDM" id="38258920"/>
<dbReference type="jPOST" id="P43116"/>
<dbReference type="MassIVE" id="P43116"/>
<dbReference type="PaxDb" id="9606-ENSP00000245457"/>
<dbReference type="PeptideAtlas" id="P43116"/>
<dbReference type="ProteomicsDB" id="55587"/>
<dbReference type="Antibodypedia" id="10768">
    <property type="antibodies" value="576 antibodies from 34 providers"/>
</dbReference>
<dbReference type="DNASU" id="5732"/>
<dbReference type="Ensembl" id="ENST00000245457.6">
    <property type="protein sequence ID" value="ENSP00000245457.5"/>
    <property type="gene ID" value="ENSG00000125384.8"/>
</dbReference>
<dbReference type="GeneID" id="5732"/>
<dbReference type="KEGG" id="hsa:5732"/>
<dbReference type="MANE-Select" id="ENST00000245457.6">
    <property type="protein sequence ID" value="ENSP00000245457.5"/>
    <property type="RefSeq nucleotide sequence ID" value="NM_000956.4"/>
    <property type="RefSeq protein sequence ID" value="NP_000947.2"/>
</dbReference>
<dbReference type="UCSC" id="uc001wzr.4">
    <property type="organism name" value="human"/>
</dbReference>
<dbReference type="AGR" id="HGNC:9594"/>
<dbReference type="CTD" id="5732"/>
<dbReference type="DisGeNET" id="5732"/>
<dbReference type="GeneCards" id="PTGER2"/>
<dbReference type="HGNC" id="HGNC:9594">
    <property type="gene designation" value="PTGER2"/>
</dbReference>
<dbReference type="HPA" id="ENSG00000125384">
    <property type="expression patterns" value="Tissue enhanced (bone)"/>
</dbReference>
<dbReference type="MalaCards" id="PTGER2"/>
<dbReference type="MIM" id="176804">
    <property type="type" value="gene"/>
</dbReference>
<dbReference type="neXtProt" id="NX_P43116"/>
<dbReference type="OpenTargets" id="ENSG00000125384"/>
<dbReference type="PharmGKB" id="PA287"/>
<dbReference type="VEuPathDB" id="HostDB:ENSG00000125384"/>
<dbReference type="eggNOG" id="KOG3656">
    <property type="taxonomic scope" value="Eukaryota"/>
</dbReference>
<dbReference type="GeneTree" id="ENSGT01050000244902"/>
<dbReference type="HOGENOM" id="CLU_045991_0_1_1"/>
<dbReference type="InParanoid" id="P43116"/>
<dbReference type="OMA" id="CSVSPFV"/>
<dbReference type="OrthoDB" id="5959154at2759"/>
<dbReference type="PAN-GO" id="P43116">
    <property type="GO annotations" value="6 GO annotations based on evolutionary models"/>
</dbReference>
<dbReference type="PhylomeDB" id="P43116"/>
<dbReference type="TreeFam" id="TF324982"/>
<dbReference type="PathwayCommons" id="P43116"/>
<dbReference type="Reactome" id="R-HSA-391908">
    <property type="pathway name" value="Prostanoid ligand receptors"/>
</dbReference>
<dbReference type="Reactome" id="R-HSA-418555">
    <property type="pathway name" value="G alpha (s) signalling events"/>
</dbReference>
<dbReference type="SABIO-RK" id="P43116"/>
<dbReference type="SignaLink" id="P43116"/>
<dbReference type="SIGNOR" id="P43116"/>
<dbReference type="BioGRID-ORCS" id="5732">
    <property type="hits" value="13 hits in 1156 CRISPR screens"/>
</dbReference>
<dbReference type="GeneWiki" id="Prostaglandin_E2_receptor"/>
<dbReference type="GenomeRNAi" id="5732"/>
<dbReference type="Pharos" id="P43116">
    <property type="development level" value="Tclin"/>
</dbReference>
<dbReference type="PRO" id="PR:P43116"/>
<dbReference type="Proteomes" id="UP000005640">
    <property type="component" value="Chromosome 14"/>
</dbReference>
<dbReference type="RNAct" id="P43116">
    <property type="molecule type" value="protein"/>
</dbReference>
<dbReference type="Bgee" id="ENSG00000125384">
    <property type="expression patterns" value="Expressed in granulocyte and 107 other cell types or tissues"/>
</dbReference>
<dbReference type="ExpressionAtlas" id="P43116">
    <property type="expression patterns" value="baseline and differential"/>
</dbReference>
<dbReference type="GO" id="GO:0005886">
    <property type="term" value="C:plasma membrane"/>
    <property type="evidence" value="ECO:0000314"/>
    <property type="project" value="UniProt"/>
</dbReference>
<dbReference type="GO" id="GO:0004957">
    <property type="term" value="F:prostaglandin E receptor activity"/>
    <property type="evidence" value="ECO:0000314"/>
    <property type="project" value="UniProt"/>
</dbReference>
<dbReference type="GO" id="GO:0007189">
    <property type="term" value="P:adenylate cyclase-activating G protein-coupled receptor signaling pathway"/>
    <property type="evidence" value="ECO:0000314"/>
    <property type="project" value="UniProt"/>
</dbReference>
<dbReference type="GO" id="GO:0071380">
    <property type="term" value="P:cellular response to prostaglandin E stimulus"/>
    <property type="evidence" value="ECO:0000250"/>
    <property type="project" value="BHF-UCL"/>
</dbReference>
<dbReference type="GO" id="GO:0007186">
    <property type="term" value="P:G protein-coupled receptor signaling pathway"/>
    <property type="evidence" value="ECO:0000304"/>
    <property type="project" value="ProtInc"/>
</dbReference>
<dbReference type="GO" id="GO:0006954">
    <property type="term" value="P:inflammatory response"/>
    <property type="evidence" value="ECO:0000318"/>
    <property type="project" value="GO_Central"/>
</dbReference>
<dbReference type="GO" id="GO:0007204">
    <property type="term" value="P:positive regulation of cytosolic calcium ion concentration"/>
    <property type="evidence" value="ECO:0000318"/>
    <property type="project" value="GO_Central"/>
</dbReference>
<dbReference type="GO" id="GO:0042127">
    <property type="term" value="P:regulation of cell population proliferation"/>
    <property type="evidence" value="ECO:0007669"/>
    <property type="project" value="Ensembl"/>
</dbReference>
<dbReference type="GO" id="GO:0032496">
    <property type="term" value="P:response to lipopolysaccharide"/>
    <property type="evidence" value="ECO:0007669"/>
    <property type="project" value="Ensembl"/>
</dbReference>
<dbReference type="GO" id="GO:0009624">
    <property type="term" value="P:response to nematode"/>
    <property type="evidence" value="ECO:0007669"/>
    <property type="project" value="Ensembl"/>
</dbReference>
<dbReference type="GO" id="GO:0032570">
    <property type="term" value="P:response to progesterone"/>
    <property type="evidence" value="ECO:0007669"/>
    <property type="project" value="Ensembl"/>
</dbReference>
<dbReference type="CDD" id="cd15139">
    <property type="entry name" value="7tmA_PGE2_EP2"/>
    <property type="match status" value="1"/>
</dbReference>
<dbReference type="FunFam" id="1.20.1070.10:FF:000212">
    <property type="entry name" value="Prostaglandin E2 receptor EP2 subtype"/>
    <property type="match status" value="1"/>
</dbReference>
<dbReference type="Gene3D" id="1.20.1070.10">
    <property type="entry name" value="Rhodopsin 7-helix transmembrane proteins"/>
    <property type="match status" value="1"/>
</dbReference>
<dbReference type="InterPro" id="IPR000276">
    <property type="entry name" value="GPCR_Rhodpsn"/>
</dbReference>
<dbReference type="InterPro" id="IPR017452">
    <property type="entry name" value="GPCR_Rhodpsn_7TM"/>
</dbReference>
<dbReference type="InterPro" id="IPR008365">
    <property type="entry name" value="Prostanoid_rcpt"/>
</dbReference>
<dbReference type="InterPro" id="IPR001923">
    <property type="entry name" value="Prostglndn_EP2_rcpt"/>
</dbReference>
<dbReference type="PANTHER" id="PTHR11866">
    <property type="entry name" value="G-PROTEIN COUPLED RECEPTOR FAMILY 1 MEMBER"/>
    <property type="match status" value="1"/>
</dbReference>
<dbReference type="PANTHER" id="PTHR11866:SF8">
    <property type="entry name" value="PROSTAGLANDIN E2 RECEPTOR EP2 SUBTYPE"/>
    <property type="match status" value="1"/>
</dbReference>
<dbReference type="Pfam" id="PF00001">
    <property type="entry name" value="7tm_1"/>
    <property type="match status" value="1"/>
</dbReference>
<dbReference type="PRINTS" id="PR00237">
    <property type="entry name" value="GPCRRHODOPSN"/>
</dbReference>
<dbReference type="PRINTS" id="PR01788">
    <property type="entry name" value="PROSTANOIDR"/>
</dbReference>
<dbReference type="PRINTS" id="PR00581">
    <property type="entry name" value="PRSTNOIDEP2R"/>
</dbReference>
<dbReference type="SUPFAM" id="SSF81321">
    <property type="entry name" value="Family A G protein-coupled receptor-like"/>
    <property type="match status" value="1"/>
</dbReference>
<dbReference type="PROSITE" id="PS00237">
    <property type="entry name" value="G_PROTEIN_RECEP_F1_1"/>
    <property type="match status" value="1"/>
</dbReference>
<dbReference type="PROSITE" id="PS50262">
    <property type="entry name" value="G_PROTEIN_RECEP_F1_2"/>
    <property type="match status" value="1"/>
</dbReference>
<comment type="function">
    <text>Receptor for prostaglandin E2 (PGE2). The activity of this receptor is mediated by G(s) proteins that stimulate adenylate cyclase. The subsequent raise in intracellular cAMP is responsible for the relaxing effect of this receptor on smooth muscle.</text>
</comment>
<comment type="subcellular location">
    <subcellularLocation>
        <location>Cell membrane</location>
        <topology>Multi-pass membrane protein</topology>
    </subcellularLocation>
</comment>
<comment type="tissue specificity">
    <text>Placenta and lung.</text>
</comment>
<comment type="similarity">
    <text evidence="2">Belongs to the G-protein coupled receptor 1 family.</text>
</comment>
<sequence length="358" mass="39761">MGNASNDSQSEDCETRQWLPPGESPAISSVMFSAGVLGNLIALALLARRWRGDVGCSAGRRSSLSLFHVLVTELVFTDLLGTCLISPVVLASYARNQTLVALAPESRACTYFAFAMTFFSLATMLMLFAMALERYLSIGHPYFYQRRVSRSGGLAVLPVIYAVSLLFCSLPLLDYGQYVQYCPGTWCFIRHGRTAYLQLYATLLLLLIVSVLACNFSVILNLIRMHRRSRRSRCGPSLGSGRGGPGARRRGERVSMAEETDHLILLAIMTITFAVCSLPFTIFAYMNETSSRKEKWDLQALRFLSINSIIDPWVFAILRPPVLRLMRSVLCCRISLRTQDATQTSCSTQSDASKQADL</sequence>
<accession>P43116</accession>
<accession>D3DSC0</accession>
<accession>Q52LG8</accession>
<protein>
    <recommendedName>
        <fullName>Prostaglandin E2 receptor EP2 subtype</fullName>
        <shortName>PGE receptor EP2 subtype</shortName>
        <shortName>PGE2 receptor EP2 subtype</shortName>
    </recommendedName>
    <alternativeName>
        <fullName>Prostanoid EP2 receptor</fullName>
    </alternativeName>
</protein>
<organism>
    <name type="scientific">Homo sapiens</name>
    <name type="common">Human</name>
    <dbReference type="NCBI Taxonomy" id="9606"/>
    <lineage>
        <taxon>Eukaryota</taxon>
        <taxon>Metazoa</taxon>
        <taxon>Chordata</taxon>
        <taxon>Craniata</taxon>
        <taxon>Vertebrata</taxon>
        <taxon>Euteleostomi</taxon>
        <taxon>Mammalia</taxon>
        <taxon>Eutheria</taxon>
        <taxon>Euarchontoglires</taxon>
        <taxon>Primates</taxon>
        <taxon>Haplorrhini</taxon>
        <taxon>Catarrhini</taxon>
        <taxon>Hominidae</taxon>
        <taxon>Homo</taxon>
    </lineage>
</organism>
<proteinExistence type="evidence at protein level"/>
<reference key="1">
    <citation type="journal article" date="1994" name="Mol. Pharmacol.">
        <title>Cloning of a novel human prostaglandin receptor with characteristics of the pharmacologically defined EP2 subtype.</title>
        <authorList>
            <person name="Regan J.W."/>
            <person name="Bailey T.J."/>
            <person name="Pepperl D.J."/>
            <person name="Pierce K.L."/>
            <person name="Bogardus A.M."/>
            <person name="Donello J.E."/>
            <person name="Fairbairn C.E."/>
            <person name="Kedzie K.M."/>
            <person name="Woodward D.F."/>
            <person name="Gil D.W."/>
        </authorList>
    </citation>
    <scope>NUCLEOTIDE SEQUENCE [MRNA]</scope>
    <source>
        <tissue>Placenta</tissue>
    </source>
</reference>
<reference key="2">
    <citation type="submission" date="1995-01" db="EMBL/GenBank/DDBJ databases">
        <authorList>
            <person name="Oakley C.J."/>
        </authorList>
    </citation>
    <scope>NUCLEOTIDE SEQUENCE [MRNA]</scope>
</reference>
<reference key="3">
    <citation type="journal article" date="1999" name="Gene">
        <title>Cloning, structural characterization, and chromosomal localization of the gene encoding the human prostaglandin E2 receptor EP2 subtype.</title>
        <authorList>
            <person name="Smock S.L."/>
            <person name="Pan L.C."/>
            <person name="Castleberry T.A."/>
            <person name="Lu B."/>
            <person name="Mather R.J."/>
            <person name="Owen T.A."/>
        </authorList>
    </citation>
    <scope>NUCLEOTIDE SEQUENCE [GENOMIC DNA]</scope>
</reference>
<reference key="4">
    <citation type="submission" date="2003-04" db="EMBL/GenBank/DDBJ databases">
        <title>cDNA clones of human proteins involved in signal transduction sequenced by the Guthrie cDNA resource center (www.cdna.org).</title>
        <authorList>
            <person name="Warren C.N."/>
            <person name="Aronstam R.S."/>
            <person name="Sharma S.V."/>
        </authorList>
    </citation>
    <scope>NUCLEOTIDE SEQUENCE [LARGE SCALE MRNA]</scope>
    <source>
        <tissue>Placenta</tissue>
    </source>
</reference>
<reference key="5">
    <citation type="submission" date="2006-02" db="EMBL/GenBank/DDBJ databases">
        <authorList>
            <consortium name="SeattleSNPs variation discovery resource"/>
        </authorList>
    </citation>
    <scope>NUCLEOTIDE SEQUENCE [GENOMIC DNA]</scope>
</reference>
<reference key="6">
    <citation type="submission" date="2005-09" db="EMBL/GenBank/DDBJ databases">
        <authorList>
            <person name="Mural R.J."/>
            <person name="Istrail S."/>
            <person name="Sutton G.G."/>
            <person name="Florea L."/>
            <person name="Halpern A.L."/>
            <person name="Mobarry C.M."/>
            <person name="Lippert R."/>
            <person name="Walenz B."/>
            <person name="Shatkay H."/>
            <person name="Dew I."/>
            <person name="Miller J.R."/>
            <person name="Flanigan M.J."/>
            <person name="Edwards N.J."/>
            <person name="Bolanos R."/>
            <person name="Fasulo D."/>
            <person name="Halldorsson B.V."/>
            <person name="Hannenhalli S."/>
            <person name="Turner R."/>
            <person name="Yooseph S."/>
            <person name="Lu F."/>
            <person name="Nusskern D.R."/>
            <person name="Shue B.C."/>
            <person name="Zheng X.H."/>
            <person name="Zhong F."/>
            <person name="Delcher A.L."/>
            <person name="Huson D.H."/>
            <person name="Kravitz S.A."/>
            <person name="Mouchard L."/>
            <person name="Reinert K."/>
            <person name="Remington K.A."/>
            <person name="Clark A.G."/>
            <person name="Waterman M.S."/>
            <person name="Eichler E.E."/>
            <person name="Adams M.D."/>
            <person name="Hunkapiller M.W."/>
            <person name="Myers E.W."/>
            <person name="Venter J.C."/>
        </authorList>
    </citation>
    <scope>NUCLEOTIDE SEQUENCE [LARGE SCALE GENOMIC DNA]</scope>
</reference>
<reference key="7">
    <citation type="journal article" date="2004" name="Genome Res.">
        <title>The status, quality, and expansion of the NIH full-length cDNA project: the Mammalian Gene Collection (MGC).</title>
        <authorList>
            <consortium name="The MGC Project Team"/>
        </authorList>
    </citation>
    <scope>NUCLEOTIDE SEQUENCE [LARGE SCALE MRNA]</scope>
</reference>
<gene>
    <name type="primary">PTGER2</name>
</gene>
<feature type="chain" id="PRO_0000070054" description="Prostaglandin E2 receptor EP2 subtype">
    <location>
        <begin position="1"/>
        <end position="358"/>
    </location>
</feature>
<feature type="topological domain" description="Extracellular" evidence="1">
    <location>
        <begin position="1"/>
        <end position="23"/>
    </location>
</feature>
<feature type="transmembrane region" description="Helical; Name=1" evidence="1">
    <location>
        <begin position="24"/>
        <end position="47"/>
    </location>
</feature>
<feature type="topological domain" description="Cytoplasmic" evidence="1">
    <location>
        <begin position="48"/>
        <end position="65"/>
    </location>
</feature>
<feature type="transmembrane region" description="Helical; Name=2" evidence="1">
    <location>
        <begin position="66"/>
        <end position="91"/>
    </location>
</feature>
<feature type="topological domain" description="Extracellular" evidence="1">
    <location>
        <begin position="92"/>
        <end position="111"/>
    </location>
</feature>
<feature type="transmembrane region" description="Helical; Name=3" evidence="1">
    <location>
        <begin position="112"/>
        <end position="132"/>
    </location>
</feature>
<feature type="topological domain" description="Cytoplasmic" evidence="1">
    <location>
        <begin position="133"/>
        <end position="151"/>
    </location>
</feature>
<feature type="transmembrane region" description="Helical; Name=4" evidence="1">
    <location>
        <begin position="152"/>
        <end position="176"/>
    </location>
</feature>
<feature type="topological domain" description="Extracellular" evidence="1">
    <location>
        <begin position="177"/>
        <end position="198"/>
    </location>
</feature>
<feature type="transmembrane region" description="Helical; Name=5" evidence="1">
    <location>
        <begin position="199"/>
        <end position="223"/>
    </location>
</feature>
<feature type="topological domain" description="Cytoplasmic" evidence="1">
    <location>
        <begin position="224"/>
        <end position="262"/>
    </location>
</feature>
<feature type="transmembrane region" description="Helical; Name=6" evidence="1">
    <location>
        <begin position="263"/>
        <end position="286"/>
    </location>
</feature>
<feature type="topological domain" description="Extracellular" evidence="1">
    <location>
        <begin position="287"/>
        <end position="299"/>
    </location>
</feature>
<feature type="transmembrane region" description="Helical; Name=7" evidence="1">
    <location>
        <begin position="300"/>
        <end position="323"/>
    </location>
</feature>
<feature type="topological domain" description="Cytoplasmic" evidence="1">
    <location>
        <begin position="324"/>
        <end position="358"/>
    </location>
</feature>
<feature type="region of interest" description="Disordered" evidence="3">
    <location>
        <begin position="231"/>
        <end position="253"/>
    </location>
</feature>
<feature type="glycosylation site" description="N-linked (GlcNAc...) asparagine" evidence="1">
    <location>
        <position position="3"/>
    </location>
</feature>
<feature type="glycosylation site" description="N-linked (GlcNAc...) asparagine" evidence="1">
    <location>
        <position position="6"/>
    </location>
</feature>
<feature type="glycosylation site" description="N-linked (GlcNAc...) asparagine" evidence="1">
    <location>
        <position position="96"/>
    </location>
</feature>
<feature type="glycosylation site" description="N-linked (GlcNAc...) asparagine" evidence="1">
    <location>
        <position position="287"/>
    </location>
</feature>
<feature type="disulfide bond" evidence="2">
    <location>
        <begin position="109"/>
        <end position="187"/>
    </location>
</feature>
<feature type="sequence conflict" description="In Ref. 1; AAA61681 and 3; AAD44177." evidence="4" ref="1 3">
    <original>R</original>
    <variation>A</variation>
    <location>
        <position position="150"/>
    </location>
</feature>
<feature type="helix" evidence="5">
    <location>
        <begin position="27"/>
        <end position="45"/>
    </location>
</feature>
<feature type="helix" evidence="5">
    <location>
        <begin position="66"/>
        <end position="82"/>
    </location>
</feature>
<feature type="turn" evidence="5">
    <location>
        <begin position="83"/>
        <end position="85"/>
    </location>
</feature>
<feature type="helix" evidence="5">
    <location>
        <begin position="86"/>
        <end position="93"/>
    </location>
</feature>
<feature type="turn" evidence="5">
    <location>
        <begin position="97"/>
        <end position="99"/>
    </location>
</feature>
<feature type="strand" evidence="5">
    <location>
        <begin position="104"/>
        <end position="107"/>
    </location>
</feature>
<feature type="helix" evidence="5">
    <location>
        <begin position="110"/>
        <end position="139"/>
    </location>
</feature>
<feature type="helix" evidence="5">
    <location>
        <begin position="141"/>
        <end position="147"/>
    </location>
</feature>
<feature type="helix" evidence="5">
    <location>
        <begin position="150"/>
        <end position="153"/>
    </location>
</feature>
<feature type="helix" evidence="5">
    <location>
        <begin position="156"/>
        <end position="169"/>
    </location>
</feature>
<feature type="helix" evidence="5">
    <location>
        <begin position="170"/>
        <end position="173"/>
    </location>
</feature>
<feature type="strand" evidence="5">
    <location>
        <begin position="178"/>
        <end position="180"/>
    </location>
</feature>
<feature type="strand" evidence="5">
    <location>
        <begin position="187"/>
        <end position="189"/>
    </location>
</feature>
<feature type="strand" evidence="5">
    <location>
        <begin position="191"/>
        <end position="195"/>
    </location>
</feature>
<feature type="helix" evidence="5">
    <location>
        <begin position="196"/>
        <end position="227"/>
    </location>
</feature>
<feature type="helix" evidence="5">
    <location>
        <begin position="259"/>
        <end position="276"/>
    </location>
</feature>
<feature type="helix" evidence="5">
    <location>
        <begin position="278"/>
        <end position="283"/>
    </location>
</feature>
<feature type="turn" evidence="5">
    <location>
        <begin position="288"/>
        <end position="295"/>
    </location>
</feature>
<feature type="helix" evidence="5">
    <location>
        <begin position="297"/>
        <end position="316"/>
    </location>
</feature>
<feature type="helix" evidence="5">
    <location>
        <begin position="320"/>
        <end position="329"/>
    </location>
</feature>